<accession>P0CF02</accession>
<reference key="1">
    <citation type="journal article" date="2010" name="Toxicon">
        <title>A biochemical characterization of the major peptides from the venom of the giant Neotropical hunting ant Dinoponera australis.</title>
        <authorList>
            <person name="Johnson S.R."/>
            <person name="Copello J.A."/>
            <person name="Evans M.S."/>
            <person name="Suarez A.V."/>
        </authorList>
    </citation>
    <scope>PROTEIN SEQUENCE</scope>
    <scope>MASS SPECTROMETRY</scope>
    <scope>SYNTHESIS</scope>
    <scope>AMIDATION AT ALA-28</scope>
    <scope>SUBCELLULAR LOCATION</scope>
    <source>
        <tissue>Venom</tissue>
    </source>
</reference>
<reference key="2">
    <citation type="journal article" date="2016" name="Toxins">
        <title>The biochemical toxin arsenal from ant venoms.</title>
        <authorList>
            <person name="Touchard A."/>
            <person name="Aili S.R."/>
            <person name="Fox E.G."/>
            <person name="Escoubas P."/>
            <person name="Orivel J."/>
            <person name="Nicholson G.M."/>
            <person name="Dejean A."/>
        </authorList>
    </citation>
    <scope>REVIEW</scope>
    <scope>NOMENCLATURE</scope>
</reference>
<evidence type="ECO:0000250" key="1">
    <source>
        <dbReference type="UniProtKB" id="P82416"/>
    </source>
</evidence>
<evidence type="ECO:0000269" key="2">
    <source>
    </source>
</evidence>
<evidence type="ECO:0000269" key="3">
    <source>
    </source>
</evidence>
<evidence type="ECO:0000303" key="4">
    <source>
    </source>
</evidence>
<evidence type="ECO:0000303" key="5">
    <source>
    </source>
</evidence>
<evidence type="ECO:0000305" key="6"/>
<evidence type="ECO:0000305" key="7">
    <source>
    </source>
</evidence>
<sequence length="28" mass="3108">GLKDWWNKHKDKIIAVAKEMGKAGLQAA</sequence>
<dbReference type="GO" id="GO:0005576">
    <property type="term" value="C:extracellular region"/>
    <property type="evidence" value="ECO:0007669"/>
    <property type="project" value="UniProtKB-SubCell"/>
</dbReference>
<dbReference type="GO" id="GO:0090729">
    <property type="term" value="F:toxin activity"/>
    <property type="evidence" value="ECO:0007669"/>
    <property type="project" value="UniProtKB-KW"/>
</dbReference>
<dbReference type="GO" id="GO:0042742">
    <property type="term" value="P:defense response to bacterium"/>
    <property type="evidence" value="ECO:0007669"/>
    <property type="project" value="UniProtKB-KW"/>
</dbReference>
<name>TX4A_DINAS</name>
<keyword id="KW-0027">Amidation</keyword>
<keyword id="KW-0044">Antibiotic</keyword>
<keyword id="KW-0929">Antimicrobial</keyword>
<keyword id="KW-0903">Direct protein sequencing</keyword>
<keyword id="KW-0964">Secreted</keyword>
<keyword id="KW-0800">Toxin</keyword>
<organism>
    <name type="scientific">Dinoponera australis</name>
    <name type="common">Giant neotropical hunting ant</name>
    <dbReference type="NCBI Taxonomy" id="609289"/>
    <lineage>
        <taxon>Eukaryota</taxon>
        <taxon>Metazoa</taxon>
        <taxon>Ecdysozoa</taxon>
        <taxon>Arthropoda</taxon>
        <taxon>Hexapoda</taxon>
        <taxon>Insecta</taxon>
        <taxon>Pterygota</taxon>
        <taxon>Neoptera</taxon>
        <taxon>Endopterygota</taxon>
        <taxon>Hymenoptera</taxon>
        <taxon>Apocrita</taxon>
        <taxon>Aculeata</taxon>
        <taxon>Formicoidea</taxon>
        <taxon>Formicidae</taxon>
        <taxon>Ponerinae</taxon>
        <taxon>Ponerini</taxon>
        <taxon>Dinoponera</taxon>
    </lineage>
</organism>
<comment type="function">
    <text evidence="1">Shows a broad spectrum of activity against both Gram-positive and Gram-negative bacteria. Also has antimicrobial activity against S.cerevisiae. Has insecticidal and non-hemolytic activity.</text>
</comment>
<comment type="subcellular location">
    <subcellularLocation>
        <location evidence="2">Secreted</location>
    </subcellularLocation>
</comment>
<comment type="tissue specificity">
    <text evidence="7">Expressed by the venom gland.</text>
</comment>
<comment type="mass spectrometry" mass="3104.7" method="Electrospray" evidence="2"/>
<protein>
    <recommendedName>
        <fullName evidence="5">U1-poneritoxin-Da4a</fullName>
        <shortName evidence="5">U1-PONTX-Da4a</shortName>
    </recommendedName>
    <alternativeName>
        <fullName evidence="4">Dinoponeratoxin Da-3105</fullName>
    </alternativeName>
    <alternativeName>
        <fullName evidence="6">Poneratoxin</fullName>
    </alternativeName>
</protein>
<proteinExistence type="evidence at protein level"/>
<feature type="peptide" id="PRO_0000393346" description="U1-poneritoxin-Da4a" evidence="3">
    <location>
        <begin position="1"/>
        <end position="28"/>
    </location>
</feature>
<feature type="modified residue" description="Alanine amide" evidence="2">
    <location>
        <position position="28"/>
    </location>
</feature>